<comment type="function">
    <text evidence="1">Catalyzes the conversion of (8S)-3',8-cyclo-7,8-dihydroguanosine 5'-triphosphate to cyclic pyranopterin monophosphate (cPMP).</text>
</comment>
<comment type="catalytic activity">
    <reaction evidence="1">
        <text>(8S)-3',8-cyclo-7,8-dihydroguanosine 5'-triphosphate = cyclic pyranopterin phosphate + diphosphate</text>
        <dbReference type="Rhea" id="RHEA:49580"/>
        <dbReference type="ChEBI" id="CHEBI:33019"/>
        <dbReference type="ChEBI" id="CHEBI:59648"/>
        <dbReference type="ChEBI" id="CHEBI:131766"/>
        <dbReference type="EC" id="4.6.1.17"/>
    </reaction>
</comment>
<comment type="pathway">
    <text evidence="1">Cofactor biosynthesis; molybdopterin biosynthesis.</text>
</comment>
<comment type="subunit">
    <text evidence="1">Homohexamer; trimer of dimers.</text>
</comment>
<comment type="similarity">
    <text evidence="1">Belongs to the MoaC family.</text>
</comment>
<reference key="1">
    <citation type="journal article" date="2005" name="J. Bacteriol.">
        <title>Whole-genome sequence analysis of Pseudomonas syringae pv. phaseolicola 1448A reveals divergence among pathovars in genes involved in virulence and transposition.</title>
        <authorList>
            <person name="Joardar V."/>
            <person name="Lindeberg M."/>
            <person name="Jackson R.W."/>
            <person name="Selengut J."/>
            <person name="Dodson R."/>
            <person name="Brinkac L.M."/>
            <person name="Daugherty S.C."/>
            <person name="DeBoy R.T."/>
            <person name="Durkin A.S."/>
            <person name="Gwinn Giglio M."/>
            <person name="Madupu R."/>
            <person name="Nelson W.C."/>
            <person name="Rosovitz M.J."/>
            <person name="Sullivan S.A."/>
            <person name="Crabtree J."/>
            <person name="Creasy T."/>
            <person name="Davidsen T.M."/>
            <person name="Haft D.H."/>
            <person name="Zafar N."/>
            <person name="Zhou L."/>
            <person name="Halpin R."/>
            <person name="Holley T."/>
            <person name="Khouri H.M."/>
            <person name="Feldblyum T.V."/>
            <person name="White O."/>
            <person name="Fraser C.M."/>
            <person name="Chatterjee A.K."/>
            <person name="Cartinhour S."/>
            <person name="Schneider D."/>
            <person name="Mansfield J.W."/>
            <person name="Collmer A."/>
            <person name="Buell R."/>
        </authorList>
    </citation>
    <scope>NUCLEOTIDE SEQUENCE [LARGE SCALE GENOMIC DNA]</scope>
    <source>
        <strain>1448A / Race 6</strain>
    </source>
</reference>
<name>MOAC_PSE14</name>
<sequence length="161" mass="16884">MLTHLDSQGRANMVDVTDKAVTSREAVAEAVVRMLPTTLQMIVSGGHPKGDVFAVARIAGIQAAKKTSDLIPLCHPLMLTSIKVHLAADGDDAVRITASCKLAGQTGVEMEALTAASIAALTIYDMCKAVDRGMVIESVRLLEKLGGKSGHFIADQAQVSS</sequence>
<proteinExistence type="inferred from homology"/>
<accession>Q48MI2</accession>
<protein>
    <recommendedName>
        <fullName evidence="1">Cyclic pyranopterin monophosphate synthase</fullName>
        <ecNumber evidence="1">4.6.1.17</ecNumber>
    </recommendedName>
    <alternativeName>
        <fullName evidence="1">Molybdenum cofactor biosynthesis protein C</fullName>
    </alternativeName>
</protein>
<organism>
    <name type="scientific">Pseudomonas savastanoi pv. phaseolicola (strain 1448A / Race 6)</name>
    <name type="common">Pseudomonas syringae pv. phaseolicola (strain 1448A / Race 6)</name>
    <dbReference type="NCBI Taxonomy" id="264730"/>
    <lineage>
        <taxon>Bacteria</taxon>
        <taxon>Pseudomonadati</taxon>
        <taxon>Pseudomonadota</taxon>
        <taxon>Gammaproteobacteria</taxon>
        <taxon>Pseudomonadales</taxon>
        <taxon>Pseudomonadaceae</taxon>
        <taxon>Pseudomonas</taxon>
    </lineage>
</organism>
<dbReference type="EC" id="4.6.1.17" evidence="1"/>
<dbReference type="EMBL" id="CP000058">
    <property type="protein sequence ID" value="AAZ36394.1"/>
    <property type="molecule type" value="Genomic_DNA"/>
</dbReference>
<dbReference type="RefSeq" id="WP_004658312.1">
    <property type="nucleotide sequence ID" value="NC_005773.3"/>
</dbReference>
<dbReference type="SMR" id="Q48MI2"/>
<dbReference type="KEGG" id="psp:PSPPH_1122"/>
<dbReference type="eggNOG" id="COG0315">
    <property type="taxonomic scope" value="Bacteria"/>
</dbReference>
<dbReference type="HOGENOM" id="CLU_074693_1_1_6"/>
<dbReference type="UniPathway" id="UPA00344"/>
<dbReference type="Proteomes" id="UP000000551">
    <property type="component" value="Chromosome"/>
</dbReference>
<dbReference type="GO" id="GO:0061799">
    <property type="term" value="F:cyclic pyranopterin monophosphate synthase activity"/>
    <property type="evidence" value="ECO:0007669"/>
    <property type="project" value="UniProtKB-UniRule"/>
</dbReference>
<dbReference type="GO" id="GO:0006777">
    <property type="term" value="P:Mo-molybdopterin cofactor biosynthetic process"/>
    <property type="evidence" value="ECO:0007669"/>
    <property type="project" value="UniProtKB-UniRule"/>
</dbReference>
<dbReference type="CDD" id="cd01420">
    <property type="entry name" value="MoaC_PE"/>
    <property type="match status" value="1"/>
</dbReference>
<dbReference type="FunFam" id="3.30.70.640:FF:000001">
    <property type="entry name" value="Cyclic pyranopterin monophosphate synthase"/>
    <property type="match status" value="1"/>
</dbReference>
<dbReference type="Gene3D" id="3.30.70.640">
    <property type="entry name" value="Molybdopterin cofactor biosynthesis C (MoaC) domain"/>
    <property type="match status" value="1"/>
</dbReference>
<dbReference type="HAMAP" id="MF_01224_B">
    <property type="entry name" value="MoaC_B"/>
    <property type="match status" value="1"/>
</dbReference>
<dbReference type="InterPro" id="IPR023045">
    <property type="entry name" value="MoaC"/>
</dbReference>
<dbReference type="InterPro" id="IPR047594">
    <property type="entry name" value="MoaC_bact/euk"/>
</dbReference>
<dbReference type="InterPro" id="IPR036522">
    <property type="entry name" value="MoaC_sf"/>
</dbReference>
<dbReference type="InterPro" id="IPR050105">
    <property type="entry name" value="MoCo_biosynth_MoaA/MoaC"/>
</dbReference>
<dbReference type="InterPro" id="IPR002820">
    <property type="entry name" value="Mopterin_CF_biosynth-C_dom"/>
</dbReference>
<dbReference type="NCBIfam" id="TIGR00581">
    <property type="entry name" value="moaC"/>
    <property type="match status" value="1"/>
</dbReference>
<dbReference type="NCBIfam" id="NF006870">
    <property type="entry name" value="PRK09364.1"/>
    <property type="match status" value="1"/>
</dbReference>
<dbReference type="PANTHER" id="PTHR22960:SF29">
    <property type="entry name" value="CYCLIC PYRANOPTERIN MONOPHOSPHATE SYNTHASE"/>
    <property type="match status" value="1"/>
</dbReference>
<dbReference type="PANTHER" id="PTHR22960">
    <property type="entry name" value="MOLYBDOPTERIN COFACTOR SYNTHESIS PROTEIN A"/>
    <property type="match status" value="1"/>
</dbReference>
<dbReference type="Pfam" id="PF01967">
    <property type="entry name" value="MoaC"/>
    <property type="match status" value="1"/>
</dbReference>
<dbReference type="SUPFAM" id="SSF55040">
    <property type="entry name" value="Molybdenum cofactor biosynthesis protein C, MoaC"/>
    <property type="match status" value="1"/>
</dbReference>
<evidence type="ECO:0000255" key="1">
    <source>
        <dbReference type="HAMAP-Rule" id="MF_01224"/>
    </source>
</evidence>
<keyword id="KW-0456">Lyase</keyword>
<keyword id="KW-0501">Molybdenum cofactor biosynthesis</keyword>
<feature type="chain" id="PRO_1000054117" description="Cyclic pyranopterin monophosphate synthase">
    <location>
        <begin position="1"/>
        <end position="161"/>
    </location>
</feature>
<feature type="active site" evidence="1">
    <location>
        <position position="125"/>
    </location>
</feature>
<feature type="binding site" evidence="1">
    <location>
        <begin position="73"/>
        <end position="75"/>
    </location>
    <ligand>
        <name>substrate</name>
    </ligand>
</feature>
<feature type="binding site" evidence="1">
    <location>
        <begin position="110"/>
        <end position="111"/>
    </location>
    <ligand>
        <name>substrate</name>
    </ligand>
</feature>
<gene>
    <name evidence="1" type="primary">moaC</name>
    <name type="ordered locus">PSPPH_1122</name>
</gene>